<reference key="1">
    <citation type="journal article" date="2009" name="PLoS Genet.">
        <title>Organised genome dynamics in the Escherichia coli species results in highly diverse adaptive paths.</title>
        <authorList>
            <person name="Touchon M."/>
            <person name="Hoede C."/>
            <person name="Tenaillon O."/>
            <person name="Barbe V."/>
            <person name="Baeriswyl S."/>
            <person name="Bidet P."/>
            <person name="Bingen E."/>
            <person name="Bonacorsi S."/>
            <person name="Bouchier C."/>
            <person name="Bouvet O."/>
            <person name="Calteau A."/>
            <person name="Chiapello H."/>
            <person name="Clermont O."/>
            <person name="Cruveiller S."/>
            <person name="Danchin A."/>
            <person name="Diard M."/>
            <person name="Dossat C."/>
            <person name="Karoui M.E."/>
            <person name="Frapy E."/>
            <person name="Garry L."/>
            <person name="Ghigo J.M."/>
            <person name="Gilles A.M."/>
            <person name="Johnson J."/>
            <person name="Le Bouguenec C."/>
            <person name="Lescat M."/>
            <person name="Mangenot S."/>
            <person name="Martinez-Jehanne V."/>
            <person name="Matic I."/>
            <person name="Nassif X."/>
            <person name="Oztas S."/>
            <person name="Petit M.A."/>
            <person name="Pichon C."/>
            <person name="Rouy Z."/>
            <person name="Ruf C.S."/>
            <person name="Schneider D."/>
            <person name="Tourret J."/>
            <person name="Vacherie B."/>
            <person name="Vallenet D."/>
            <person name="Medigue C."/>
            <person name="Rocha E.P.C."/>
            <person name="Denamur E."/>
        </authorList>
    </citation>
    <scope>NUCLEOTIDE SEQUENCE [LARGE SCALE GENOMIC DNA]</scope>
    <source>
        <strain>55989 / EAEC</strain>
    </source>
</reference>
<protein>
    <recommendedName>
        <fullName evidence="1">Ribosomal protein L11 methyltransferase</fullName>
        <shortName evidence="1">L11 Mtase</shortName>
        <ecNumber evidence="1">2.1.1.-</ecNumber>
    </recommendedName>
</protein>
<accession>B7LHW6</accession>
<keyword id="KW-0963">Cytoplasm</keyword>
<keyword id="KW-0489">Methyltransferase</keyword>
<keyword id="KW-1185">Reference proteome</keyword>
<keyword id="KW-0949">S-adenosyl-L-methionine</keyword>
<keyword id="KW-0808">Transferase</keyword>
<sequence>MPWIQLKLNTTGANAEDLSDALMEAGAVSITFQDTHDTPVFEPLPGETRLWGDTDVIGLFDAETDMNDVVAILENHPLLGAGFAHKIEQLEDKDWEREWMDNFHPMRFGERLWICPSWRDVPDENAVNVMLDPGLAFGTGTHPTTSLCLQWLDSLDLTGKTVIDFGCGSGILAIAALKLGAAKAIGIDIDPQAIQASRNNAERNGVSDRLELYLPKDQPEEMKADVVVANILAGPLRELAPLISVLPVSGGLLGLSGILASQAESVCEAYADSFALDPVVEKEEWCRITGRKN</sequence>
<dbReference type="EC" id="2.1.1.-" evidence="1"/>
<dbReference type="EMBL" id="CU928145">
    <property type="protein sequence ID" value="CAU99944.1"/>
    <property type="molecule type" value="Genomic_DNA"/>
</dbReference>
<dbReference type="RefSeq" id="WP_001145830.1">
    <property type="nucleotide sequence ID" value="NC_011748.1"/>
</dbReference>
<dbReference type="SMR" id="B7LHW6"/>
<dbReference type="KEGG" id="eck:EC55989_3673"/>
<dbReference type="HOGENOM" id="CLU_049382_4_1_6"/>
<dbReference type="Proteomes" id="UP000000746">
    <property type="component" value="Chromosome"/>
</dbReference>
<dbReference type="GO" id="GO:0005829">
    <property type="term" value="C:cytosol"/>
    <property type="evidence" value="ECO:0007669"/>
    <property type="project" value="TreeGrafter"/>
</dbReference>
<dbReference type="GO" id="GO:0016279">
    <property type="term" value="F:protein-lysine N-methyltransferase activity"/>
    <property type="evidence" value="ECO:0007669"/>
    <property type="project" value="TreeGrafter"/>
</dbReference>
<dbReference type="GO" id="GO:0032259">
    <property type="term" value="P:methylation"/>
    <property type="evidence" value="ECO:0007669"/>
    <property type="project" value="UniProtKB-KW"/>
</dbReference>
<dbReference type="CDD" id="cd02440">
    <property type="entry name" value="AdoMet_MTases"/>
    <property type="match status" value="1"/>
</dbReference>
<dbReference type="FunFam" id="3.40.50.150:FF:000021">
    <property type="entry name" value="Ribosomal protein L11 methyltransferase"/>
    <property type="match status" value="1"/>
</dbReference>
<dbReference type="Gene3D" id="3.40.50.150">
    <property type="entry name" value="Vaccinia Virus protein VP39"/>
    <property type="match status" value="1"/>
</dbReference>
<dbReference type="HAMAP" id="MF_00735">
    <property type="entry name" value="Methyltr_PrmA"/>
    <property type="match status" value="1"/>
</dbReference>
<dbReference type="InterPro" id="IPR050078">
    <property type="entry name" value="Ribosomal_L11_MeTrfase_PrmA"/>
</dbReference>
<dbReference type="InterPro" id="IPR004498">
    <property type="entry name" value="Ribosomal_PrmA_MeTrfase"/>
</dbReference>
<dbReference type="InterPro" id="IPR029063">
    <property type="entry name" value="SAM-dependent_MTases_sf"/>
</dbReference>
<dbReference type="NCBIfam" id="TIGR00406">
    <property type="entry name" value="prmA"/>
    <property type="match status" value="1"/>
</dbReference>
<dbReference type="PANTHER" id="PTHR43648">
    <property type="entry name" value="ELECTRON TRANSFER FLAVOPROTEIN BETA SUBUNIT LYSINE METHYLTRANSFERASE"/>
    <property type="match status" value="1"/>
</dbReference>
<dbReference type="PANTHER" id="PTHR43648:SF1">
    <property type="entry name" value="ELECTRON TRANSFER FLAVOPROTEIN BETA SUBUNIT LYSINE METHYLTRANSFERASE"/>
    <property type="match status" value="1"/>
</dbReference>
<dbReference type="Pfam" id="PF06325">
    <property type="entry name" value="PrmA"/>
    <property type="match status" value="1"/>
</dbReference>
<dbReference type="PIRSF" id="PIRSF000401">
    <property type="entry name" value="RPL11_MTase"/>
    <property type="match status" value="1"/>
</dbReference>
<dbReference type="SUPFAM" id="SSF53335">
    <property type="entry name" value="S-adenosyl-L-methionine-dependent methyltransferases"/>
    <property type="match status" value="1"/>
</dbReference>
<gene>
    <name evidence="1" type="primary">prmA</name>
    <name type="ordered locus">EC55989_3673</name>
</gene>
<evidence type="ECO:0000255" key="1">
    <source>
        <dbReference type="HAMAP-Rule" id="MF_00735"/>
    </source>
</evidence>
<feature type="chain" id="PRO_1000192620" description="Ribosomal protein L11 methyltransferase">
    <location>
        <begin position="1"/>
        <end position="293"/>
    </location>
</feature>
<feature type="binding site" evidence="1">
    <location>
        <position position="145"/>
    </location>
    <ligand>
        <name>S-adenosyl-L-methionine</name>
        <dbReference type="ChEBI" id="CHEBI:59789"/>
    </ligand>
</feature>
<feature type="binding site" evidence="1">
    <location>
        <position position="166"/>
    </location>
    <ligand>
        <name>S-adenosyl-L-methionine</name>
        <dbReference type="ChEBI" id="CHEBI:59789"/>
    </ligand>
</feature>
<feature type="binding site" evidence="1">
    <location>
        <position position="188"/>
    </location>
    <ligand>
        <name>S-adenosyl-L-methionine</name>
        <dbReference type="ChEBI" id="CHEBI:59789"/>
    </ligand>
</feature>
<feature type="binding site" evidence="1">
    <location>
        <position position="230"/>
    </location>
    <ligand>
        <name>S-adenosyl-L-methionine</name>
        <dbReference type="ChEBI" id="CHEBI:59789"/>
    </ligand>
</feature>
<comment type="function">
    <text evidence="1">Methylates ribosomal protein L11.</text>
</comment>
<comment type="catalytic activity">
    <reaction evidence="1">
        <text>L-lysyl-[protein] + 3 S-adenosyl-L-methionine = N(6),N(6),N(6)-trimethyl-L-lysyl-[protein] + 3 S-adenosyl-L-homocysteine + 3 H(+)</text>
        <dbReference type="Rhea" id="RHEA:54192"/>
        <dbReference type="Rhea" id="RHEA-COMP:9752"/>
        <dbReference type="Rhea" id="RHEA-COMP:13826"/>
        <dbReference type="ChEBI" id="CHEBI:15378"/>
        <dbReference type="ChEBI" id="CHEBI:29969"/>
        <dbReference type="ChEBI" id="CHEBI:57856"/>
        <dbReference type="ChEBI" id="CHEBI:59789"/>
        <dbReference type="ChEBI" id="CHEBI:61961"/>
    </reaction>
</comment>
<comment type="subcellular location">
    <subcellularLocation>
        <location evidence="1">Cytoplasm</location>
    </subcellularLocation>
</comment>
<comment type="similarity">
    <text evidence="1">Belongs to the methyltransferase superfamily. PrmA family.</text>
</comment>
<organism>
    <name type="scientific">Escherichia coli (strain 55989 / EAEC)</name>
    <dbReference type="NCBI Taxonomy" id="585055"/>
    <lineage>
        <taxon>Bacteria</taxon>
        <taxon>Pseudomonadati</taxon>
        <taxon>Pseudomonadota</taxon>
        <taxon>Gammaproteobacteria</taxon>
        <taxon>Enterobacterales</taxon>
        <taxon>Enterobacteriaceae</taxon>
        <taxon>Escherichia</taxon>
    </lineage>
</organism>
<name>PRMA_ECO55</name>
<proteinExistence type="inferred from homology"/>